<feature type="chain" id="PRO_0000273106" description="DNA topoisomerase 1">
    <location>
        <begin position="1"/>
        <end position="779"/>
    </location>
</feature>
<feature type="domain" description="Toprim" evidence="1">
    <location>
        <begin position="1"/>
        <end position="111"/>
    </location>
</feature>
<feature type="domain" description="Topo IA-type catalytic" evidence="2">
    <location>
        <begin position="132"/>
        <end position="568"/>
    </location>
</feature>
<feature type="zinc finger region" description="C4-type">
    <location>
        <begin position="600"/>
        <end position="627"/>
    </location>
</feature>
<feature type="region of interest" description="Interaction with DNA" evidence="1">
    <location>
        <begin position="166"/>
        <end position="171"/>
    </location>
</feature>
<feature type="active site" description="O-(5'-phospho-DNA)-tyrosine intermediate" evidence="2">
    <location>
        <position position="304"/>
    </location>
</feature>
<feature type="binding site" evidence="1">
    <location>
        <position position="7"/>
    </location>
    <ligand>
        <name>Mg(2+)</name>
        <dbReference type="ChEBI" id="CHEBI:18420"/>
        <note>catalytic</note>
    </ligand>
</feature>
<feature type="binding site" evidence="1">
    <location>
        <position position="80"/>
    </location>
    <ligand>
        <name>Mg(2+)</name>
        <dbReference type="ChEBI" id="CHEBI:18420"/>
        <note>catalytic</note>
    </ligand>
</feature>
<feature type="site" description="Interaction with DNA" evidence="1">
    <location>
        <position position="31"/>
    </location>
</feature>
<feature type="site" description="Interaction with DNA" evidence="1">
    <location>
        <position position="142"/>
    </location>
</feature>
<feature type="site" description="Interaction with DNA" evidence="1">
    <location>
        <position position="143"/>
    </location>
</feature>
<feature type="site" description="Interaction with DNA" evidence="1">
    <location>
        <position position="146"/>
    </location>
</feature>
<feature type="site" description="Interaction with DNA" evidence="1">
    <location>
        <position position="158"/>
    </location>
</feature>
<feature type="site" description="Interaction with DNA" evidence="1">
    <location>
        <position position="306"/>
    </location>
</feature>
<feature type="site" description="Interaction with DNA" evidence="1">
    <location>
        <position position="499"/>
    </location>
</feature>
<proteinExistence type="inferred from homology"/>
<accession>Q68X45</accession>
<reference key="1">
    <citation type="journal article" date="2004" name="J. Bacteriol.">
        <title>Complete genome sequence of Rickettsia typhi and comparison with sequences of other Rickettsiae.</title>
        <authorList>
            <person name="McLeod M.P."/>
            <person name="Qin X."/>
            <person name="Karpathy S.E."/>
            <person name="Gioia J."/>
            <person name="Highlander S.K."/>
            <person name="Fox G.E."/>
            <person name="McNeill T.Z."/>
            <person name="Jiang H."/>
            <person name="Muzny D."/>
            <person name="Jacob L.S."/>
            <person name="Hawes A.C."/>
            <person name="Sodergren E."/>
            <person name="Gill R."/>
            <person name="Hume J."/>
            <person name="Morgan M."/>
            <person name="Fan G."/>
            <person name="Amin A.G."/>
            <person name="Gibbs R.A."/>
            <person name="Hong C."/>
            <person name="Yu X.-J."/>
            <person name="Walker D.H."/>
            <person name="Weinstock G.M."/>
        </authorList>
    </citation>
    <scope>NUCLEOTIDE SEQUENCE [LARGE SCALE GENOMIC DNA]</scope>
    <source>
        <strain>ATCC VR-144 / Wilmington</strain>
    </source>
</reference>
<dbReference type="EC" id="5.6.2.1" evidence="1"/>
<dbReference type="EMBL" id="AE017197">
    <property type="protein sequence ID" value="AAU03797.1"/>
    <property type="molecule type" value="Genomic_DNA"/>
</dbReference>
<dbReference type="RefSeq" id="WP_011190781.1">
    <property type="nucleotide sequence ID" value="NC_006142.1"/>
</dbReference>
<dbReference type="SMR" id="Q68X45"/>
<dbReference type="KEGG" id="rty:RT0317"/>
<dbReference type="eggNOG" id="COG0550">
    <property type="taxonomic scope" value="Bacteria"/>
</dbReference>
<dbReference type="HOGENOM" id="CLU_002929_4_3_5"/>
<dbReference type="OrthoDB" id="9804262at2"/>
<dbReference type="Proteomes" id="UP000000604">
    <property type="component" value="Chromosome"/>
</dbReference>
<dbReference type="GO" id="GO:0005694">
    <property type="term" value="C:chromosome"/>
    <property type="evidence" value="ECO:0007669"/>
    <property type="project" value="InterPro"/>
</dbReference>
<dbReference type="GO" id="GO:0003677">
    <property type="term" value="F:DNA binding"/>
    <property type="evidence" value="ECO:0007669"/>
    <property type="project" value="UniProtKB-KW"/>
</dbReference>
<dbReference type="GO" id="GO:0003917">
    <property type="term" value="F:DNA topoisomerase type I (single strand cut, ATP-independent) activity"/>
    <property type="evidence" value="ECO:0007669"/>
    <property type="project" value="UniProtKB-UniRule"/>
</dbReference>
<dbReference type="GO" id="GO:0008270">
    <property type="term" value="F:zinc ion binding"/>
    <property type="evidence" value="ECO:0007669"/>
    <property type="project" value="UniProtKB-KW"/>
</dbReference>
<dbReference type="GO" id="GO:0006265">
    <property type="term" value="P:DNA topological change"/>
    <property type="evidence" value="ECO:0007669"/>
    <property type="project" value="UniProtKB-UniRule"/>
</dbReference>
<dbReference type="CDD" id="cd00186">
    <property type="entry name" value="TOP1Ac"/>
    <property type="match status" value="1"/>
</dbReference>
<dbReference type="CDD" id="cd03363">
    <property type="entry name" value="TOPRIM_TopoIA_TopoI"/>
    <property type="match status" value="1"/>
</dbReference>
<dbReference type="Gene3D" id="3.40.50.140">
    <property type="match status" value="1"/>
</dbReference>
<dbReference type="Gene3D" id="3.30.65.10">
    <property type="entry name" value="Bacterial Topoisomerase I, domain 1"/>
    <property type="match status" value="1"/>
</dbReference>
<dbReference type="Gene3D" id="1.10.460.10">
    <property type="entry name" value="Topoisomerase I, domain 2"/>
    <property type="match status" value="1"/>
</dbReference>
<dbReference type="Gene3D" id="2.70.20.10">
    <property type="entry name" value="Topoisomerase I, domain 3"/>
    <property type="match status" value="1"/>
</dbReference>
<dbReference type="Gene3D" id="1.10.290.10">
    <property type="entry name" value="Topoisomerase I, domain 4"/>
    <property type="match status" value="1"/>
</dbReference>
<dbReference type="HAMAP" id="MF_00952">
    <property type="entry name" value="Topoisom_1_prok"/>
    <property type="match status" value="1"/>
</dbReference>
<dbReference type="InterPro" id="IPR000380">
    <property type="entry name" value="Topo_IA"/>
</dbReference>
<dbReference type="InterPro" id="IPR003601">
    <property type="entry name" value="Topo_IA_2"/>
</dbReference>
<dbReference type="InterPro" id="IPR023406">
    <property type="entry name" value="Topo_IA_AS"/>
</dbReference>
<dbReference type="InterPro" id="IPR013497">
    <property type="entry name" value="Topo_IA_cen"/>
</dbReference>
<dbReference type="InterPro" id="IPR013824">
    <property type="entry name" value="Topo_IA_cen_sub1"/>
</dbReference>
<dbReference type="InterPro" id="IPR013825">
    <property type="entry name" value="Topo_IA_cen_sub2"/>
</dbReference>
<dbReference type="InterPro" id="IPR013826">
    <property type="entry name" value="Topo_IA_cen_sub3"/>
</dbReference>
<dbReference type="InterPro" id="IPR023405">
    <property type="entry name" value="Topo_IA_core_domain"/>
</dbReference>
<dbReference type="InterPro" id="IPR003602">
    <property type="entry name" value="Topo_IA_DNA-bd_dom"/>
</dbReference>
<dbReference type="InterPro" id="IPR013498">
    <property type="entry name" value="Topo_IA_Znf"/>
</dbReference>
<dbReference type="InterPro" id="IPR005733">
    <property type="entry name" value="TopoI_bac-type"/>
</dbReference>
<dbReference type="InterPro" id="IPR028612">
    <property type="entry name" value="Topoisom_1_IA"/>
</dbReference>
<dbReference type="InterPro" id="IPR025589">
    <property type="entry name" value="Toprim_C_rpt"/>
</dbReference>
<dbReference type="InterPro" id="IPR006171">
    <property type="entry name" value="TOPRIM_dom"/>
</dbReference>
<dbReference type="InterPro" id="IPR034149">
    <property type="entry name" value="TOPRIM_TopoI"/>
</dbReference>
<dbReference type="NCBIfam" id="TIGR01051">
    <property type="entry name" value="topA_bact"/>
    <property type="match status" value="1"/>
</dbReference>
<dbReference type="PANTHER" id="PTHR42785:SF1">
    <property type="entry name" value="DNA TOPOISOMERASE"/>
    <property type="match status" value="1"/>
</dbReference>
<dbReference type="PANTHER" id="PTHR42785">
    <property type="entry name" value="DNA TOPOISOMERASE, TYPE IA, CORE"/>
    <property type="match status" value="1"/>
</dbReference>
<dbReference type="Pfam" id="PF01131">
    <property type="entry name" value="Topoisom_bac"/>
    <property type="match status" value="1"/>
</dbReference>
<dbReference type="Pfam" id="PF01751">
    <property type="entry name" value="Toprim"/>
    <property type="match status" value="1"/>
</dbReference>
<dbReference type="Pfam" id="PF13368">
    <property type="entry name" value="Toprim_C_rpt"/>
    <property type="match status" value="2"/>
</dbReference>
<dbReference type="Pfam" id="PF01396">
    <property type="entry name" value="Zn_ribbon_Top1"/>
    <property type="match status" value="1"/>
</dbReference>
<dbReference type="PRINTS" id="PR00417">
    <property type="entry name" value="PRTPISMRASEI"/>
</dbReference>
<dbReference type="SMART" id="SM00437">
    <property type="entry name" value="TOP1Ac"/>
    <property type="match status" value="1"/>
</dbReference>
<dbReference type="SMART" id="SM00436">
    <property type="entry name" value="TOP1Bc"/>
    <property type="match status" value="1"/>
</dbReference>
<dbReference type="SMART" id="SM00493">
    <property type="entry name" value="TOPRIM"/>
    <property type="match status" value="1"/>
</dbReference>
<dbReference type="SUPFAM" id="SSF56712">
    <property type="entry name" value="Prokaryotic type I DNA topoisomerase"/>
    <property type="match status" value="1"/>
</dbReference>
<dbReference type="SUPFAM" id="SSF57783">
    <property type="entry name" value="Zinc beta-ribbon"/>
    <property type="match status" value="1"/>
</dbReference>
<dbReference type="PROSITE" id="PS00396">
    <property type="entry name" value="TOPO_IA_1"/>
    <property type="match status" value="1"/>
</dbReference>
<dbReference type="PROSITE" id="PS52039">
    <property type="entry name" value="TOPO_IA_2"/>
    <property type="match status" value="1"/>
</dbReference>
<dbReference type="PROSITE" id="PS50880">
    <property type="entry name" value="TOPRIM"/>
    <property type="match status" value="1"/>
</dbReference>
<organism>
    <name type="scientific">Rickettsia typhi (strain ATCC VR-144 / Wilmington)</name>
    <dbReference type="NCBI Taxonomy" id="257363"/>
    <lineage>
        <taxon>Bacteria</taxon>
        <taxon>Pseudomonadati</taxon>
        <taxon>Pseudomonadota</taxon>
        <taxon>Alphaproteobacteria</taxon>
        <taxon>Rickettsiales</taxon>
        <taxon>Rickettsiaceae</taxon>
        <taxon>Rickettsieae</taxon>
        <taxon>Rickettsia</taxon>
        <taxon>typhus group</taxon>
    </lineage>
</organism>
<protein>
    <recommendedName>
        <fullName evidence="1">DNA topoisomerase 1</fullName>
        <ecNumber evidence="1">5.6.2.1</ecNumber>
    </recommendedName>
    <alternativeName>
        <fullName evidence="1">DNA topoisomerase I</fullName>
    </alternativeName>
    <alternativeName>
        <fullName>Omega-protein</fullName>
    </alternativeName>
    <alternativeName>
        <fullName>Relaxing enzyme</fullName>
    </alternativeName>
    <alternativeName>
        <fullName>Swivelase</fullName>
    </alternativeName>
    <alternativeName>
        <fullName>Untwisting enzyme</fullName>
    </alternativeName>
</protein>
<name>TOP1_RICTY</name>
<evidence type="ECO:0000255" key="1">
    <source>
        <dbReference type="HAMAP-Rule" id="MF_00952"/>
    </source>
</evidence>
<evidence type="ECO:0000255" key="2">
    <source>
        <dbReference type="PROSITE-ProRule" id="PRU01383"/>
    </source>
</evidence>
<comment type="function">
    <text evidence="1">Releases the supercoiling and torsional tension of DNA, which is introduced during the DNA replication and transcription, by transiently cleaving and rejoining one strand of the DNA duplex. Introduces a single-strand break via transesterification at a target site in duplex DNA. The scissile phosphodiester is attacked by the catalytic tyrosine of the enzyme, resulting in the formation of a DNA-(5'-phosphotyrosyl)-enzyme intermediate and the expulsion of a 3'-OH DNA strand. The free DNA strand then undergoes passage around the unbroken strand, thus removing DNA supercoils. Finally, in the religation step, the DNA 3'-OH attacks the covalent intermediate to expel the active-site tyrosine and restore the DNA phosphodiester backbone.</text>
</comment>
<comment type="catalytic activity">
    <reaction evidence="1">
        <text>ATP-independent breakage of single-stranded DNA, followed by passage and rejoining.</text>
        <dbReference type="EC" id="5.6.2.1"/>
    </reaction>
</comment>
<comment type="cofactor">
    <cofactor evidence="1">
        <name>Mg(2+)</name>
        <dbReference type="ChEBI" id="CHEBI:18420"/>
    </cofactor>
</comment>
<comment type="subunit">
    <text evidence="1">Monomer.</text>
</comment>
<comment type="similarity">
    <text evidence="1">Belongs to the type IA topoisomerase family.</text>
</comment>
<gene>
    <name evidence="1" type="primary">topA</name>
    <name type="ordered locus">RT0317</name>
</gene>
<keyword id="KW-0238">DNA-binding</keyword>
<keyword id="KW-0413">Isomerase</keyword>
<keyword id="KW-0460">Magnesium</keyword>
<keyword id="KW-0479">Metal-binding</keyword>
<keyword id="KW-0799">Topoisomerase</keyword>
<keyword id="KW-0862">Zinc</keyword>
<keyword id="KW-0863">Zinc-finger</keyword>
<sequence length="779" mass="89083">MKLVIVESPAKAKTINKYLGDEFKVIASFGHIRDLPSKKGSVLPDKNFAMEYDISDKASKYVDAIVKYARKAEAVYLATDPDREGESISWHVAEVIKEKNKVESDDFFKRVAFNEITKKAIIHAVENPRKLDTNLVNAQQARRALDYLVGFTLSPLLWRKLPGCKSAGRVQSVALRLICDREDEIERFKAEEYWDISLKMQNSNNELFTAKLTHVNDQKLKKFSIINEKEAKDLTRKLKLQKFYVEKIEKKQQKRQPQPPFITSSLQQEAARKLGFSAKKTMQIAQKLYEGVDIGKETIGLITYMRTDGVTLSNDAIADIRKLIDKNYGNKYLPINPRIYQSKVKNAQEAHEAIRPTNITYTPDNLKQKLEKDYYKLYELIWQRTIACQMENVIMDLVIANLASENKEYLAKANGSIIAFDGFYKVYRESLDDEDEEDNKMLPPLKAQEHIKTKEVIPNKHFTEPPPRYSEASLVKKLEELGIGRPSTYASILSVLQDRKYVTLEKKRFIPEELGRLVTVFLVGFFKKYVEYDFTAGLENELDEIAAGKLEWKTSLNNFWSGFNNNIESVNEQKITEIINYLQKALDYHLFGENKESKVCPSCKTGQLSLKLGKFGAFLACSNYPECTFKKSIVSGNDNNEDEGNLSTILNDNKILGTDKDGVEIYLKTGPYGPYIQLGEQCGKVKPKRTPVPTNLKQSEITLEVALKLLSLPLKIGIHKDSGEEIIIGYSKFGPYIKYMCKFISVPKKYDFLNLNLDDAIKLIENNKAKLEKKHRSMV</sequence>